<accession>A5U9W4</accession>
<evidence type="ECO:0000255" key="1">
    <source>
        <dbReference type="HAMAP-Rule" id="MF_00358"/>
    </source>
</evidence>
<evidence type="ECO:0000256" key="2">
    <source>
        <dbReference type="SAM" id="MobiDB-lite"/>
    </source>
</evidence>
<evidence type="ECO:0000305" key="3"/>
<proteinExistence type="inferred from homology"/>
<organism>
    <name type="scientific">Haemophilus influenzae (strain PittEE)</name>
    <dbReference type="NCBI Taxonomy" id="374930"/>
    <lineage>
        <taxon>Bacteria</taxon>
        <taxon>Pseudomonadati</taxon>
        <taxon>Pseudomonadota</taxon>
        <taxon>Gammaproteobacteria</taxon>
        <taxon>Pasteurellales</taxon>
        <taxon>Pasteurellaceae</taxon>
        <taxon>Haemophilus</taxon>
    </lineage>
</organism>
<feature type="chain" id="PRO_1000005118" description="Small ribosomal subunit protein bS21">
    <location>
        <begin position="1"/>
        <end position="71"/>
    </location>
</feature>
<feature type="region of interest" description="Disordered" evidence="2">
    <location>
        <begin position="48"/>
        <end position="71"/>
    </location>
</feature>
<feature type="compositionally biased region" description="Basic and acidic residues" evidence="2">
    <location>
        <begin position="60"/>
        <end position="71"/>
    </location>
</feature>
<protein>
    <recommendedName>
        <fullName evidence="1">Small ribosomal subunit protein bS21</fullName>
    </recommendedName>
    <alternativeName>
        <fullName evidence="3">30S ribosomal protein S21</fullName>
    </alternativeName>
</protein>
<name>RS21_HAEIE</name>
<keyword id="KW-0687">Ribonucleoprotein</keyword>
<keyword id="KW-0689">Ribosomal protein</keyword>
<comment type="similarity">
    <text evidence="1">Belongs to the bacterial ribosomal protein bS21 family.</text>
</comment>
<dbReference type="EMBL" id="CP000671">
    <property type="protein sequence ID" value="ABQ97565.1"/>
    <property type="molecule type" value="Genomic_DNA"/>
</dbReference>
<dbReference type="SMR" id="A5U9W4"/>
<dbReference type="KEGG" id="hip:CGSHiEE_00335"/>
<dbReference type="HOGENOM" id="CLU_159258_1_0_6"/>
<dbReference type="GO" id="GO:1990904">
    <property type="term" value="C:ribonucleoprotein complex"/>
    <property type="evidence" value="ECO:0007669"/>
    <property type="project" value="UniProtKB-KW"/>
</dbReference>
<dbReference type="GO" id="GO:0005840">
    <property type="term" value="C:ribosome"/>
    <property type="evidence" value="ECO:0007669"/>
    <property type="project" value="UniProtKB-KW"/>
</dbReference>
<dbReference type="GO" id="GO:0003735">
    <property type="term" value="F:structural constituent of ribosome"/>
    <property type="evidence" value="ECO:0007669"/>
    <property type="project" value="InterPro"/>
</dbReference>
<dbReference type="GO" id="GO:0006412">
    <property type="term" value="P:translation"/>
    <property type="evidence" value="ECO:0007669"/>
    <property type="project" value="UniProtKB-UniRule"/>
</dbReference>
<dbReference type="Gene3D" id="1.20.5.1150">
    <property type="entry name" value="Ribosomal protein S8"/>
    <property type="match status" value="1"/>
</dbReference>
<dbReference type="HAMAP" id="MF_00358">
    <property type="entry name" value="Ribosomal_bS21"/>
    <property type="match status" value="1"/>
</dbReference>
<dbReference type="InterPro" id="IPR001911">
    <property type="entry name" value="Ribosomal_bS21"/>
</dbReference>
<dbReference type="InterPro" id="IPR018278">
    <property type="entry name" value="Ribosomal_bS21_CS"/>
</dbReference>
<dbReference type="InterPro" id="IPR038380">
    <property type="entry name" value="Ribosomal_bS21_sf"/>
</dbReference>
<dbReference type="NCBIfam" id="TIGR00030">
    <property type="entry name" value="S21p"/>
    <property type="match status" value="1"/>
</dbReference>
<dbReference type="PANTHER" id="PTHR21109">
    <property type="entry name" value="MITOCHONDRIAL 28S RIBOSOMAL PROTEIN S21"/>
    <property type="match status" value="1"/>
</dbReference>
<dbReference type="PANTHER" id="PTHR21109:SF22">
    <property type="entry name" value="SMALL RIBOSOMAL SUBUNIT PROTEIN BS21"/>
    <property type="match status" value="1"/>
</dbReference>
<dbReference type="Pfam" id="PF01165">
    <property type="entry name" value="Ribosomal_S21"/>
    <property type="match status" value="1"/>
</dbReference>
<dbReference type="PRINTS" id="PR00976">
    <property type="entry name" value="RIBOSOMALS21"/>
</dbReference>
<dbReference type="PROSITE" id="PS01181">
    <property type="entry name" value="RIBOSOMAL_S21"/>
    <property type="match status" value="1"/>
</dbReference>
<reference key="1">
    <citation type="journal article" date="2007" name="Genome Biol.">
        <title>Characterization and modeling of the Haemophilus influenzae core and supragenomes based on the complete genomic sequences of Rd and 12 clinical nontypeable strains.</title>
        <authorList>
            <person name="Hogg J.S."/>
            <person name="Hu F.Z."/>
            <person name="Janto B."/>
            <person name="Boissy R."/>
            <person name="Hayes J."/>
            <person name="Keefe R."/>
            <person name="Post J.C."/>
            <person name="Ehrlich G.D."/>
        </authorList>
    </citation>
    <scope>NUCLEOTIDE SEQUENCE [LARGE SCALE GENOMIC DNA]</scope>
    <source>
        <strain>PittEE</strain>
    </source>
</reference>
<gene>
    <name evidence="1" type="primary">rpsU</name>
    <name type="ordered locus">CGSHiEE_00335</name>
</gene>
<sequence length="71" mass="8462">MPVIKVRENESFDVALRRFKRSCEKAGILAEVRAREFYEKPTTIRKRENATLAKRHAKRNARENARNTRLY</sequence>